<proteinExistence type="inferred from homology"/>
<accession>Q46ZA5</accession>
<feature type="chain" id="PRO_0000272505" description="Phosphate import ATP-binding protein PstB">
    <location>
        <begin position="1"/>
        <end position="262"/>
    </location>
</feature>
<feature type="domain" description="ABC transporter" evidence="1">
    <location>
        <begin position="16"/>
        <end position="257"/>
    </location>
</feature>
<feature type="binding site" evidence="1">
    <location>
        <begin position="48"/>
        <end position="55"/>
    </location>
    <ligand>
        <name>ATP</name>
        <dbReference type="ChEBI" id="CHEBI:30616"/>
    </ligand>
</feature>
<organism>
    <name type="scientific">Cupriavidus pinatubonensis (strain JMP 134 / LMG 1197)</name>
    <name type="common">Cupriavidus necator (strain JMP 134)</name>
    <dbReference type="NCBI Taxonomy" id="264198"/>
    <lineage>
        <taxon>Bacteria</taxon>
        <taxon>Pseudomonadati</taxon>
        <taxon>Pseudomonadota</taxon>
        <taxon>Betaproteobacteria</taxon>
        <taxon>Burkholderiales</taxon>
        <taxon>Burkholderiaceae</taxon>
        <taxon>Cupriavidus</taxon>
    </lineage>
</organism>
<reference key="1">
    <citation type="journal article" date="2010" name="PLoS ONE">
        <title>The complete multipartite genome sequence of Cupriavidus necator JMP134, a versatile pollutant degrader.</title>
        <authorList>
            <person name="Lykidis A."/>
            <person name="Perez-Pantoja D."/>
            <person name="Ledger T."/>
            <person name="Mavromatis K."/>
            <person name="Anderson I.J."/>
            <person name="Ivanova N.N."/>
            <person name="Hooper S.D."/>
            <person name="Lapidus A."/>
            <person name="Lucas S."/>
            <person name="Gonzalez B."/>
            <person name="Kyrpides N.C."/>
        </authorList>
    </citation>
    <scope>NUCLEOTIDE SEQUENCE [LARGE SCALE GENOMIC DNA]</scope>
    <source>
        <strain>JMP134 / LMG 1197</strain>
    </source>
</reference>
<gene>
    <name evidence="1" type="primary">pstB</name>
    <name type="ordered locus">Reut_A2164</name>
</gene>
<protein>
    <recommendedName>
        <fullName evidence="1">Phosphate import ATP-binding protein PstB</fullName>
        <ecNumber evidence="1">7.3.2.1</ecNumber>
    </recommendedName>
    <alternativeName>
        <fullName evidence="1">ABC phosphate transporter</fullName>
    </alternativeName>
    <alternativeName>
        <fullName evidence="1">Phosphate-transporting ATPase</fullName>
    </alternativeName>
</protein>
<keyword id="KW-0067">ATP-binding</keyword>
<keyword id="KW-0997">Cell inner membrane</keyword>
<keyword id="KW-1003">Cell membrane</keyword>
<keyword id="KW-0472">Membrane</keyword>
<keyword id="KW-0547">Nucleotide-binding</keyword>
<keyword id="KW-0592">Phosphate transport</keyword>
<keyword id="KW-1278">Translocase</keyword>
<keyword id="KW-0813">Transport</keyword>
<comment type="function">
    <text evidence="1">Part of the ABC transporter complex PstSACB involved in phosphate import. Responsible for energy coupling to the transport system.</text>
</comment>
<comment type="catalytic activity">
    <reaction evidence="1">
        <text>phosphate(out) + ATP + H2O = ADP + 2 phosphate(in) + H(+)</text>
        <dbReference type="Rhea" id="RHEA:24440"/>
        <dbReference type="ChEBI" id="CHEBI:15377"/>
        <dbReference type="ChEBI" id="CHEBI:15378"/>
        <dbReference type="ChEBI" id="CHEBI:30616"/>
        <dbReference type="ChEBI" id="CHEBI:43474"/>
        <dbReference type="ChEBI" id="CHEBI:456216"/>
        <dbReference type="EC" id="7.3.2.1"/>
    </reaction>
</comment>
<comment type="subunit">
    <text evidence="1">The complex is composed of two ATP-binding proteins (PstB), two transmembrane proteins (PstC and PstA) and a solute-binding protein (PstS).</text>
</comment>
<comment type="subcellular location">
    <subcellularLocation>
        <location evidence="1">Cell inner membrane</location>
        <topology evidence="1">Peripheral membrane protein</topology>
    </subcellularLocation>
</comment>
<comment type="similarity">
    <text evidence="1">Belongs to the ABC transporter superfamily. Phosphate importer (TC 3.A.1.7) family.</text>
</comment>
<dbReference type="EC" id="7.3.2.1" evidence="1"/>
<dbReference type="EMBL" id="CP000090">
    <property type="protein sequence ID" value="AAZ61528.1"/>
    <property type="molecule type" value="Genomic_DNA"/>
</dbReference>
<dbReference type="SMR" id="Q46ZA5"/>
<dbReference type="STRING" id="264198.Reut_A2164"/>
<dbReference type="KEGG" id="reu:Reut_A2164"/>
<dbReference type="eggNOG" id="COG1117">
    <property type="taxonomic scope" value="Bacteria"/>
</dbReference>
<dbReference type="HOGENOM" id="CLU_000604_1_22_4"/>
<dbReference type="OrthoDB" id="9802264at2"/>
<dbReference type="GO" id="GO:0005886">
    <property type="term" value="C:plasma membrane"/>
    <property type="evidence" value="ECO:0007669"/>
    <property type="project" value="UniProtKB-SubCell"/>
</dbReference>
<dbReference type="GO" id="GO:0005524">
    <property type="term" value="F:ATP binding"/>
    <property type="evidence" value="ECO:0007669"/>
    <property type="project" value="UniProtKB-KW"/>
</dbReference>
<dbReference type="GO" id="GO:0016887">
    <property type="term" value="F:ATP hydrolysis activity"/>
    <property type="evidence" value="ECO:0007669"/>
    <property type="project" value="InterPro"/>
</dbReference>
<dbReference type="GO" id="GO:0015415">
    <property type="term" value="F:ATPase-coupled phosphate ion transmembrane transporter activity"/>
    <property type="evidence" value="ECO:0007669"/>
    <property type="project" value="UniProtKB-EC"/>
</dbReference>
<dbReference type="GO" id="GO:0035435">
    <property type="term" value="P:phosphate ion transmembrane transport"/>
    <property type="evidence" value="ECO:0007669"/>
    <property type="project" value="InterPro"/>
</dbReference>
<dbReference type="CDD" id="cd03260">
    <property type="entry name" value="ABC_PstB_phosphate_transporter"/>
    <property type="match status" value="1"/>
</dbReference>
<dbReference type="FunFam" id="3.40.50.300:FF:000132">
    <property type="entry name" value="Phosphate import ATP-binding protein PstB"/>
    <property type="match status" value="1"/>
</dbReference>
<dbReference type="Gene3D" id="3.40.50.300">
    <property type="entry name" value="P-loop containing nucleotide triphosphate hydrolases"/>
    <property type="match status" value="1"/>
</dbReference>
<dbReference type="InterPro" id="IPR003593">
    <property type="entry name" value="AAA+_ATPase"/>
</dbReference>
<dbReference type="InterPro" id="IPR003439">
    <property type="entry name" value="ABC_transporter-like_ATP-bd"/>
</dbReference>
<dbReference type="InterPro" id="IPR017871">
    <property type="entry name" value="ABC_transporter-like_CS"/>
</dbReference>
<dbReference type="InterPro" id="IPR027417">
    <property type="entry name" value="P-loop_NTPase"/>
</dbReference>
<dbReference type="InterPro" id="IPR005670">
    <property type="entry name" value="PstB-like"/>
</dbReference>
<dbReference type="NCBIfam" id="TIGR00972">
    <property type="entry name" value="3a0107s01c2"/>
    <property type="match status" value="1"/>
</dbReference>
<dbReference type="PANTHER" id="PTHR43423">
    <property type="entry name" value="ABC TRANSPORTER I FAMILY MEMBER 17"/>
    <property type="match status" value="1"/>
</dbReference>
<dbReference type="PANTHER" id="PTHR43423:SF3">
    <property type="entry name" value="PHOSPHATE IMPORT ATP-BINDING PROTEIN PSTB"/>
    <property type="match status" value="1"/>
</dbReference>
<dbReference type="Pfam" id="PF00005">
    <property type="entry name" value="ABC_tran"/>
    <property type="match status" value="1"/>
</dbReference>
<dbReference type="SMART" id="SM00382">
    <property type="entry name" value="AAA"/>
    <property type="match status" value="1"/>
</dbReference>
<dbReference type="SUPFAM" id="SSF52540">
    <property type="entry name" value="P-loop containing nucleoside triphosphate hydrolases"/>
    <property type="match status" value="1"/>
</dbReference>
<dbReference type="PROSITE" id="PS00211">
    <property type="entry name" value="ABC_TRANSPORTER_1"/>
    <property type="match status" value="1"/>
</dbReference>
<dbReference type="PROSITE" id="PS50893">
    <property type="entry name" value="ABC_TRANSPORTER_2"/>
    <property type="match status" value="1"/>
</dbReference>
<dbReference type="PROSITE" id="PS51238">
    <property type="entry name" value="PSTB"/>
    <property type="match status" value="1"/>
</dbReference>
<name>PSTB_CUPPJ</name>
<sequence>MTSTVIDIPDSVRAKIDVRNLNFYYGQFHALKNINMSIPDRKVTAFIGPSGCGKSTLLRTFNKMYGLYPEQRAEGEINMDGENLLTSRQDIALLRAKVGMVFQKPTPFPMSIYDNIAFGVRLFEKLSRSEMDDRVEWALSKAALWNEAKDKLHQSGYGLSGGQQQRLCIARGIAIRPEVLLLDEPCSALDPISTGRIEELIAELKDEYTVVIVTHNMQQAARCSDYTAYMYLGELIEFGETEKIFIKPHRKETEDYITGRFG</sequence>
<evidence type="ECO:0000255" key="1">
    <source>
        <dbReference type="HAMAP-Rule" id="MF_01702"/>
    </source>
</evidence>